<organism>
    <name type="scientific">Aspergillus flavus (strain ATCC MYA-384 / AF70)</name>
    <dbReference type="NCBI Taxonomy" id="1392242"/>
    <lineage>
        <taxon>Eukaryota</taxon>
        <taxon>Fungi</taxon>
        <taxon>Dikarya</taxon>
        <taxon>Ascomycota</taxon>
        <taxon>Pezizomycotina</taxon>
        <taxon>Eurotiomycetes</taxon>
        <taxon>Eurotiomycetidae</taxon>
        <taxon>Eurotiales</taxon>
        <taxon>Aspergillaceae</taxon>
        <taxon>Aspergillus</taxon>
        <taxon>Aspergillus subgen. Circumdati</taxon>
    </lineage>
</organism>
<protein>
    <recommendedName>
        <fullName>Endopolygalacturonase B</fullName>
        <ecNumber>3.2.1.15</ecNumber>
    </recommendedName>
    <alternativeName>
        <fullName>P1/P3</fullName>
    </alternativeName>
    <alternativeName>
        <fullName>PGL</fullName>
    </alternativeName>
    <alternativeName>
        <fullName>Pectinase B</fullName>
    </alternativeName>
    <alternativeName>
        <fullName>Polygalacturonase B</fullName>
    </alternativeName>
</protein>
<reference key="1">
    <citation type="journal article" date="1995" name="Appl. Environ. Microbiol.">
        <title>Isolation and characterization of polygalacturonase genes (pecA and pecB) from Aspergillus flavus.</title>
        <authorList>
            <person name="Whitehead M.P."/>
            <person name="Shieh M.T."/>
            <person name="Cleveland T.E."/>
            <person name="Cary J.W."/>
            <person name="Dean R.A."/>
        </authorList>
    </citation>
    <scope>NUCLEOTIDE SEQUENCE [GENOMIC DNA]</scope>
    <scope>FUNCTION</scope>
    <scope>INDUCTION</scope>
    <source>
        <strain>ATCC MYA-384 / AF70</strain>
    </source>
</reference>
<reference key="2">
    <citation type="journal article" date="2018" name="PLoS ONE">
        <title>Whole genome comparison of Aspergillus flavus L-morphotype strain NRRL 3357 (type) and S-morphotype strain AF70.</title>
        <authorList>
            <person name="Gilbert M.K."/>
            <person name="Mack B.M."/>
            <person name="Moore G.G."/>
            <person name="Downey D.L."/>
            <person name="Lebar M.D."/>
            <person name="Joardar V."/>
            <person name="Losada L."/>
            <person name="Yu J."/>
            <person name="Nierman W.C."/>
            <person name="Bhatnagar D."/>
        </authorList>
    </citation>
    <scope>NUCLEOTIDE SEQUENCE [LARGE SCALE GENOMIC DNA]</scope>
    <source>
        <strain>ATCC MYA-384 / AF70</strain>
    </source>
</reference>
<dbReference type="EC" id="3.2.1.15"/>
<dbReference type="EMBL" id="U05020">
    <property type="protein sequence ID" value="AAA85280.1"/>
    <property type="molecule type" value="Unassigned_DNA"/>
</dbReference>
<dbReference type="EMBL" id="JZDT01000916">
    <property type="protein sequence ID" value="KOC18689.1"/>
    <property type="molecule type" value="Genomic_DNA"/>
</dbReference>
<dbReference type="SMR" id="P41750"/>
<dbReference type="CAZy" id="GH28">
    <property type="family name" value="Glycoside Hydrolase Family 28"/>
</dbReference>
<dbReference type="GlyCosmos" id="P41750">
    <property type="glycosylation" value="1 site, No reported glycans"/>
</dbReference>
<dbReference type="EnsemblFungi" id="EED53441">
    <property type="protein sequence ID" value="EED53441"/>
    <property type="gene ID" value="AFLA_108160"/>
</dbReference>
<dbReference type="GO" id="GO:0005576">
    <property type="term" value="C:extracellular region"/>
    <property type="evidence" value="ECO:0007669"/>
    <property type="project" value="UniProtKB-SubCell"/>
</dbReference>
<dbReference type="GO" id="GO:0004650">
    <property type="term" value="F:polygalacturonase activity"/>
    <property type="evidence" value="ECO:0007669"/>
    <property type="project" value="UniProtKB-EC"/>
</dbReference>
<dbReference type="GO" id="GO:0071555">
    <property type="term" value="P:cell wall organization"/>
    <property type="evidence" value="ECO:0007669"/>
    <property type="project" value="UniProtKB-KW"/>
</dbReference>
<dbReference type="GO" id="GO:0045490">
    <property type="term" value="P:pectin catabolic process"/>
    <property type="evidence" value="ECO:0007669"/>
    <property type="project" value="TreeGrafter"/>
</dbReference>
<dbReference type="FunFam" id="2.160.20.10:FF:000002">
    <property type="entry name" value="Endopolygalacturonase D"/>
    <property type="match status" value="1"/>
</dbReference>
<dbReference type="Gene3D" id="2.160.20.10">
    <property type="entry name" value="Single-stranded right-handed beta-helix, Pectin lyase-like"/>
    <property type="match status" value="1"/>
</dbReference>
<dbReference type="InterPro" id="IPR000743">
    <property type="entry name" value="Glyco_hydro_28"/>
</dbReference>
<dbReference type="InterPro" id="IPR050434">
    <property type="entry name" value="Glycosyl_hydrlase_28"/>
</dbReference>
<dbReference type="InterPro" id="IPR006626">
    <property type="entry name" value="PbH1"/>
</dbReference>
<dbReference type="InterPro" id="IPR012334">
    <property type="entry name" value="Pectin_lyas_fold"/>
</dbReference>
<dbReference type="InterPro" id="IPR011050">
    <property type="entry name" value="Pectin_lyase_fold/virulence"/>
</dbReference>
<dbReference type="PANTHER" id="PTHR31884:SF13">
    <property type="entry name" value="ENDOPOLYGALACTURONASE B"/>
    <property type="match status" value="1"/>
</dbReference>
<dbReference type="PANTHER" id="PTHR31884">
    <property type="entry name" value="POLYGALACTURONASE"/>
    <property type="match status" value="1"/>
</dbReference>
<dbReference type="Pfam" id="PF00295">
    <property type="entry name" value="Glyco_hydro_28"/>
    <property type="match status" value="1"/>
</dbReference>
<dbReference type="SMART" id="SM00710">
    <property type="entry name" value="PbH1"/>
    <property type="match status" value="5"/>
</dbReference>
<dbReference type="SUPFAM" id="SSF51126">
    <property type="entry name" value="Pectin lyase-like"/>
    <property type="match status" value="1"/>
</dbReference>
<dbReference type="PROSITE" id="PS00502">
    <property type="entry name" value="POLYGALACTURONASE"/>
    <property type="match status" value="1"/>
</dbReference>
<accession>P41750</accession>
<accession>A0A0D9MMX0</accession>
<accession>A0A2P2HUY9</accession>
<gene>
    <name type="primary">pgaB</name>
    <name type="synonym">pecB</name>
    <name type="ORF">AFLA70_38g004620</name>
    <name type="ORF">P034_00381312</name>
</gene>
<comment type="function">
    <text evidence="5">Involved in maceration and soft-rotting of plant tissue. Hydrolyzes the 1,4-alpha glycosidic bonds of de-esterified pectate in the smooth region of the plant cell wall.</text>
</comment>
<comment type="catalytic activity">
    <reaction>
        <text>(1,4-alpha-D-galacturonosyl)n+m + H2O = (1,4-alpha-D-galacturonosyl)n + (1,4-alpha-D-galacturonosyl)m.</text>
        <dbReference type="EC" id="3.2.1.15"/>
    </reaction>
</comment>
<comment type="subcellular location">
    <subcellularLocation>
        <location evidence="6">Secreted</location>
    </subcellularLocation>
</comment>
<comment type="induction">
    <text evidence="5">Expressed in presence of pectin when glucose is absent.</text>
</comment>
<comment type="similarity">
    <text evidence="6">Belongs to the glycosyl hydrolase 28 family.</text>
</comment>
<feature type="signal peptide" evidence="2">
    <location>
        <begin position="1"/>
        <end position="17"/>
    </location>
</feature>
<feature type="propeptide" id="PRO_0000024766" evidence="2">
    <location>
        <begin position="18"/>
        <end position="30"/>
    </location>
</feature>
<feature type="chain" id="PRO_0000024767" description="Endopolygalacturonase B">
    <location>
        <begin position="31"/>
        <end position="367"/>
    </location>
</feature>
<feature type="repeat" description="PbH1 1" evidence="2">
    <location>
        <begin position="161"/>
        <end position="191"/>
    </location>
</feature>
<feature type="repeat" description="PbH1 2" evidence="2">
    <location>
        <begin position="192"/>
        <end position="213"/>
    </location>
</feature>
<feature type="repeat" description="PbH1 3" evidence="2">
    <location>
        <begin position="214"/>
        <end position="234"/>
    </location>
</feature>
<feature type="repeat" description="PbH1 4" evidence="2">
    <location>
        <begin position="243"/>
        <end position="264"/>
    </location>
</feature>
<feature type="repeat" description="PbH1 5" evidence="2">
    <location>
        <begin position="272"/>
        <end position="294"/>
    </location>
</feature>
<feature type="active site" description="Proton donor">
    <location>
        <position position="206"/>
    </location>
</feature>
<feature type="active site" evidence="4">
    <location>
        <position position="228"/>
    </location>
</feature>
<feature type="glycosylation site" description="N-linked (GlcNAc...) asparagine" evidence="3">
    <location>
        <position position="279"/>
    </location>
</feature>
<feature type="disulfide bond" evidence="1">
    <location>
        <begin position="34"/>
        <end position="49"/>
    </location>
</feature>
<feature type="disulfide bond" evidence="1">
    <location>
        <begin position="208"/>
        <end position="224"/>
    </location>
</feature>
<feature type="disulfide bond" evidence="1">
    <location>
        <begin position="334"/>
        <end position="339"/>
    </location>
</feature>
<feature type="disulfide bond" evidence="1">
    <location>
        <begin position="358"/>
        <end position="367"/>
    </location>
</feature>
<feature type="sequence conflict" description="In Ref. 1; AAA85280." evidence="6" ref="1">
    <original>GLAALGSLA</original>
    <variation>VLAPLALSS</variation>
    <location>
        <begin position="7"/>
        <end position="15"/>
    </location>
</feature>
<feature type="sequence conflict" description="In Ref. 1; AAA85280." evidence="6" ref="1">
    <location>
        <position position="108"/>
    </location>
</feature>
<feature type="sequence conflict" description="In Ref. 1; AAA85280." evidence="6" ref="1">
    <original>G</original>
    <variation>V</variation>
    <location>
        <position position="113"/>
    </location>
</feature>
<feature type="sequence conflict" description="In Ref. 1; AAA85280." evidence="6" ref="1">
    <original>T</original>
    <variation>P</variation>
    <location>
        <position position="124"/>
    </location>
</feature>
<feature type="sequence conflict" description="In Ref. 1; AAA85280." evidence="6" ref="1">
    <original>YAHKLQSSTIK</original>
    <variation>QYPQLESPTIT</variation>
    <location>
        <begin position="135"/>
        <end position="145"/>
    </location>
</feature>
<feature type="sequence conflict" description="In Ref. 1; AAA85280." evidence="6" ref="1">
    <original>S</original>
    <variation>T</variation>
    <location>
        <position position="240"/>
    </location>
</feature>
<feature type="sequence conflict" description="In Ref. 1; AAA85280." evidence="6" ref="1">
    <original>Q</original>
    <variation>L</variation>
    <location>
        <position position="294"/>
    </location>
</feature>
<evidence type="ECO:0000250" key="1"/>
<evidence type="ECO:0000255" key="2"/>
<evidence type="ECO:0000255" key="3">
    <source>
        <dbReference type="PROSITE-ProRule" id="PRU00498"/>
    </source>
</evidence>
<evidence type="ECO:0000255" key="4">
    <source>
        <dbReference type="PROSITE-ProRule" id="PRU10052"/>
    </source>
</evidence>
<evidence type="ECO:0000269" key="5">
    <source>
    </source>
</evidence>
<evidence type="ECO:0000305" key="6"/>
<sequence>MHFQLLGLAALGSLAAAAPAPSRTSELVERGSSCTFTSAAQASASAKSCSNIVLKNIAVPAGETLDLSKAKDGATITFEGTTTFGYKEWKGPLIRFGGNKITVTQAAGAVIDGQGSRWWDGKGTNGGKTKPKFIYAHKLQSSTIKGLHVKNSPVQVFSVQGNDVHLTDITIDNSDGDNNGGHNTDAFDVSESNGVYITGANVKNQDDCLAINSGENIEFTGATCSGGHGISIGSIGNRDSNTVKNVKVADSTVVDSDNGIRIKTISGATGSVSGVTYENITLKNIKKNGIVIEQDYKNGGPTGKPTTGVPITDLTVNGVTGSVASKATPVYILCGKGSCSDWTWKGVSISGGKKSDKCQNIPSGASC</sequence>
<keyword id="KW-0961">Cell wall biogenesis/degradation</keyword>
<keyword id="KW-1015">Disulfide bond</keyword>
<keyword id="KW-0325">Glycoprotein</keyword>
<keyword id="KW-0326">Glycosidase</keyword>
<keyword id="KW-0378">Hydrolase</keyword>
<keyword id="KW-0677">Repeat</keyword>
<keyword id="KW-0964">Secreted</keyword>
<keyword id="KW-0732">Signal</keyword>
<keyword id="KW-0865">Zymogen</keyword>
<proteinExistence type="evidence at transcript level"/>
<name>PGLRB_ASPFA</name>